<accession>Q5PA76</accession>
<keyword id="KW-0687">Ribonucleoprotein</keyword>
<keyword id="KW-0689">Ribosomal protein</keyword>
<keyword id="KW-0694">RNA-binding</keyword>
<keyword id="KW-0699">rRNA-binding</keyword>
<feature type="chain" id="PRO_0000251487" description="Large ribosomal subunit protein uL15">
    <location>
        <begin position="1"/>
        <end position="146"/>
    </location>
</feature>
<feature type="region of interest" description="Disordered" evidence="2">
    <location>
        <begin position="18"/>
        <end position="45"/>
    </location>
</feature>
<feature type="compositionally biased region" description="Basic residues" evidence="2">
    <location>
        <begin position="30"/>
        <end position="39"/>
    </location>
</feature>
<protein>
    <recommendedName>
        <fullName evidence="1">Large ribosomal subunit protein uL15</fullName>
    </recommendedName>
    <alternativeName>
        <fullName evidence="3">50S ribosomal protein L15</fullName>
    </alternativeName>
</protein>
<organism>
    <name type="scientific">Anaplasma marginale (strain St. Maries)</name>
    <dbReference type="NCBI Taxonomy" id="234826"/>
    <lineage>
        <taxon>Bacteria</taxon>
        <taxon>Pseudomonadati</taxon>
        <taxon>Pseudomonadota</taxon>
        <taxon>Alphaproteobacteria</taxon>
        <taxon>Rickettsiales</taxon>
        <taxon>Anaplasmataceae</taxon>
        <taxon>Anaplasma</taxon>
    </lineage>
</organism>
<proteinExistence type="inferred from homology"/>
<evidence type="ECO:0000255" key="1">
    <source>
        <dbReference type="HAMAP-Rule" id="MF_01341"/>
    </source>
</evidence>
<evidence type="ECO:0000256" key="2">
    <source>
        <dbReference type="SAM" id="MobiDB-lite"/>
    </source>
</evidence>
<evidence type="ECO:0000305" key="3"/>
<name>RL15_ANAMM</name>
<reference key="1">
    <citation type="journal article" date="2005" name="Proc. Natl. Acad. Sci. U.S.A.">
        <title>Complete genome sequencing of Anaplasma marginale reveals that the surface is skewed to two superfamilies of outer membrane proteins.</title>
        <authorList>
            <person name="Brayton K.A."/>
            <person name="Kappmeyer L.S."/>
            <person name="Herndon D.R."/>
            <person name="Dark M.J."/>
            <person name="Tibbals D.L."/>
            <person name="Palmer G.H."/>
            <person name="McGuire T.C."/>
            <person name="Knowles D.P. Jr."/>
        </authorList>
    </citation>
    <scope>NUCLEOTIDE SEQUENCE [LARGE SCALE GENOMIC DNA]</scope>
    <source>
        <strain>St. Maries</strain>
    </source>
</reference>
<gene>
    <name evidence="1" type="primary">rplO</name>
    <name type="ordered locus">AM893</name>
</gene>
<comment type="function">
    <text evidence="1">Binds to the 23S rRNA.</text>
</comment>
<comment type="subunit">
    <text evidence="1">Part of the 50S ribosomal subunit.</text>
</comment>
<comment type="similarity">
    <text evidence="1">Belongs to the universal ribosomal protein uL15 family.</text>
</comment>
<dbReference type="EMBL" id="CP000030">
    <property type="protein sequence ID" value="AAV86804.1"/>
    <property type="molecule type" value="Genomic_DNA"/>
</dbReference>
<dbReference type="RefSeq" id="WP_011114483.1">
    <property type="nucleotide sequence ID" value="NC_004842.2"/>
</dbReference>
<dbReference type="SMR" id="Q5PA76"/>
<dbReference type="KEGG" id="ama:AM893"/>
<dbReference type="HOGENOM" id="CLU_055188_4_0_5"/>
<dbReference type="GO" id="GO:0015934">
    <property type="term" value="C:large ribosomal subunit"/>
    <property type="evidence" value="ECO:0007669"/>
    <property type="project" value="InterPro"/>
</dbReference>
<dbReference type="GO" id="GO:0019843">
    <property type="term" value="F:rRNA binding"/>
    <property type="evidence" value="ECO:0007669"/>
    <property type="project" value="UniProtKB-UniRule"/>
</dbReference>
<dbReference type="GO" id="GO:0003735">
    <property type="term" value="F:structural constituent of ribosome"/>
    <property type="evidence" value="ECO:0007669"/>
    <property type="project" value="InterPro"/>
</dbReference>
<dbReference type="GO" id="GO:0006412">
    <property type="term" value="P:translation"/>
    <property type="evidence" value="ECO:0007669"/>
    <property type="project" value="UniProtKB-UniRule"/>
</dbReference>
<dbReference type="Gene3D" id="3.100.10.10">
    <property type="match status" value="1"/>
</dbReference>
<dbReference type="HAMAP" id="MF_01341">
    <property type="entry name" value="Ribosomal_uL15"/>
    <property type="match status" value="1"/>
</dbReference>
<dbReference type="InterPro" id="IPR030878">
    <property type="entry name" value="Ribosomal_uL15"/>
</dbReference>
<dbReference type="InterPro" id="IPR021131">
    <property type="entry name" value="Ribosomal_uL15/eL18"/>
</dbReference>
<dbReference type="InterPro" id="IPR036227">
    <property type="entry name" value="Ribosomal_uL15/eL18_sf"/>
</dbReference>
<dbReference type="InterPro" id="IPR005749">
    <property type="entry name" value="Ribosomal_uL15_bac-type"/>
</dbReference>
<dbReference type="NCBIfam" id="TIGR01071">
    <property type="entry name" value="rplO_bact"/>
    <property type="match status" value="1"/>
</dbReference>
<dbReference type="PANTHER" id="PTHR12934">
    <property type="entry name" value="50S RIBOSOMAL PROTEIN L15"/>
    <property type="match status" value="1"/>
</dbReference>
<dbReference type="PANTHER" id="PTHR12934:SF11">
    <property type="entry name" value="LARGE RIBOSOMAL SUBUNIT PROTEIN UL15M"/>
    <property type="match status" value="1"/>
</dbReference>
<dbReference type="Pfam" id="PF00828">
    <property type="entry name" value="Ribosomal_L27A"/>
    <property type="match status" value="1"/>
</dbReference>
<dbReference type="SUPFAM" id="SSF52080">
    <property type="entry name" value="Ribosomal proteins L15p and L18e"/>
    <property type="match status" value="1"/>
</dbReference>
<sequence>MKLNELFAGLPKRRRPKVLGRGLGCGKGKTSGRGHKGQKARSGCAVNGFEGGQQPIFTRLPKRGFRSMSRARYEIVNIGALQRLISEKKIVDASNISKELMAELGMIPSPMSKVKILGKGALKAKVGISYDAVSKAAGKKVYLPKG</sequence>